<gene>
    <name evidence="1" type="primary">rplS</name>
    <name type="ordered locus">EAT1b_2896</name>
</gene>
<organism>
    <name type="scientific">Exiguobacterium sp. (strain ATCC BAA-1283 / AT1b)</name>
    <dbReference type="NCBI Taxonomy" id="360911"/>
    <lineage>
        <taxon>Bacteria</taxon>
        <taxon>Bacillati</taxon>
        <taxon>Bacillota</taxon>
        <taxon>Bacilli</taxon>
        <taxon>Bacillales</taxon>
        <taxon>Bacillales Family XII. Incertae Sedis</taxon>
        <taxon>Exiguobacterium</taxon>
    </lineage>
</organism>
<name>RL19_EXISA</name>
<sequence length="117" mass="13570">MNTQKLFREITEEQFKSDVPAFRPGDTVRVHVKVVEGTRERIQIFEGVVIKRKGGGISETFTVRKISYGVGVERAFPLHSPRVAQIEVVRYGKVRRAKLYYLRNLRGKAARIKEIRR</sequence>
<proteinExistence type="inferred from homology"/>
<comment type="function">
    <text evidence="1">This protein is located at the 30S-50S ribosomal subunit interface and may play a role in the structure and function of the aminoacyl-tRNA binding site.</text>
</comment>
<comment type="similarity">
    <text evidence="1">Belongs to the bacterial ribosomal protein bL19 family.</text>
</comment>
<evidence type="ECO:0000255" key="1">
    <source>
        <dbReference type="HAMAP-Rule" id="MF_00402"/>
    </source>
</evidence>
<evidence type="ECO:0000305" key="2"/>
<reference key="1">
    <citation type="journal article" date="2011" name="J. Bacteriol.">
        <title>Complete genome sequence of the Thermophilic Bacterium Exiguobacterium sp. AT1b.</title>
        <authorList>
            <person name="Vishnivetskaya T.A."/>
            <person name="Lucas S."/>
            <person name="Copeland A."/>
            <person name="Lapidus A."/>
            <person name="Glavina del Rio T."/>
            <person name="Dalin E."/>
            <person name="Tice H."/>
            <person name="Bruce D.C."/>
            <person name="Goodwin L.A."/>
            <person name="Pitluck S."/>
            <person name="Saunders E."/>
            <person name="Brettin T."/>
            <person name="Detter C."/>
            <person name="Han C."/>
            <person name="Larimer F."/>
            <person name="Land M.L."/>
            <person name="Hauser L.J."/>
            <person name="Kyrpides N.C."/>
            <person name="Ovchinnikova G."/>
            <person name="Kathariou S."/>
            <person name="Ramaley R.F."/>
            <person name="Rodrigues D.F."/>
            <person name="Hendrix C."/>
            <person name="Richardson P."/>
            <person name="Tiedje J.M."/>
        </authorList>
    </citation>
    <scope>NUCLEOTIDE SEQUENCE [LARGE SCALE GENOMIC DNA]</scope>
    <source>
        <strain>ATCC BAA-1283 / AT1b</strain>
    </source>
</reference>
<protein>
    <recommendedName>
        <fullName evidence="1">Large ribosomal subunit protein bL19</fullName>
    </recommendedName>
    <alternativeName>
        <fullName evidence="2">50S ribosomal protein L19</fullName>
    </alternativeName>
</protein>
<dbReference type="EMBL" id="CP001615">
    <property type="protein sequence ID" value="ACQ71810.1"/>
    <property type="molecule type" value="Genomic_DNA"/>
</dbReference>
<dbReference type="RefSeq" id="WP_015881369.1">
    <property type="nucleotide sequence ID" value="NZ_MOEL01000013.1"/>
</dbReference>
<dbReference type="SMR" id="C4L604"/>
<dbReference type="STRING" id="360911.EAT1b_2896"/>
<dbReference type="GeneID" id="94372440"/>
<dbReference type="KEGG" id="eat:EAT1b_2896"/>
<dbReference type="eggNOG" id="COG0335">
    <property type="taxonomic scope" value="Bacteria"/>
</dbReference>
<dbReference type="HOGENOM" id="CLU_103507_2_1_9"/>
<dbReference type="OrthoDB" id="9803541at2"/>
<dbReference type="Proteomes" id="UP000000716">
    <property type="component" value="Chromosome"/>
</dbReference>
<dbReference type="GO" id="GO:0022625">
    <property type="term" value="C:cytosolic large ribosomal subunit"/>
    <property type="evidence" value="ECO:0007669"/>
    <property type="project" value="TreeGrafter"/>
</dbReference>
<dbReference type="GO" id="GO:0003735">
    <property type="term" value="F:structural constituent of ribosome"/>
    <property type="evidence" value="ECO:0007669"/>
    <property type="project" value="InterPro"/>
</dbReference>
<dbReference type="GO" id="GO:0006412">
    <property type="term" value="P:translation"/>
    <property type="evidence" value="ECO:0007669"/>
    <property type="project" value="UniProtKB-UniRule"/>
</dbReference>
<dbReference type="FunFam" id="2.30.30.790:FF:000001">
    <property type="entry name" value="50S ribosomal protein L19"/>
    <property type="match status" value="1"/>
</dbReference>
<dbReference type="Gene3D" id="2.30.30.790">
    <property type="match status" value="1"/>
</dbReference>
<dbReference type="HAMAP" id="MF_00402">
    <property type="entry name" value="Ribosomal_bL19"/>
    <property type="match status" value="1"/>
</dbReference>
<dbReference type="InterPro" id="IPR001857">
    <property type="entry name" value="Ribosomal_bL19"/>
</dbReference>
<dbReference type="InterPro" id="IPR018257">
    <property type="entry name" value="Ribosomal_bL19_CS"/>
</dbReference>
<dbReference type="InterPro" id="IPR038657">
    <property type="entry name" value="Ribosomal_bL19_sf"/>
</dbReference>
<dbReference type="InterPro" id="IPR008991">
    <property type="entry name" value="Translation_prot_SH3-like_sf"/>
</dbReference>
<dbReference type="NCBIfam" id="TIGR01024">
    <property type="entry name" value="rplS_bact"/>
    <property type="match status" value="1"/>
</dbReference>
<dbReference type="PANTHER" id="PTHR15680:SF9">
    <property type="entry name" value="LARGE RIBOSOMAL SUBUNIT PROTEIN BL19M"/>
    <property type="match status" value="1"/>
</dbReference>
<dbReference type="PANTHER" id="PTHR15680">
    <property type="entry name" value="RIBOSOMAL PROTEIN L19"/>
    <property type="match status" value="1"/>
</dbReference>
<dbReference type="Pfam" id="PF01245">
    <property type="entry name" value="Ribosomal_L19"/>
    <property type="match status" value="1"/>
</dbReference>
<dbReference type="PIRSF" id="PIRSF002191">
    <property type="entry name" value="Ribosomal_L19"/>
    <property type="match status" value="1"/>
</dbReference>
<dbReference type="PRINTS" id="PR00061">
    <property type="entry name" value="RIBOSOMALL19"/>
</dbReference>
<dbReference type="SUPFAM" id="SSF50104">
    <property type="entry name" value="Translation proteins SH3-like domain"/>
    <property type="match status" value="1"/>
</dbReference>
<dbReference type="PROSITE" id="PS01015">
    <property type="entry name" value="RIBOSOMAL_L19"/>
    <property type="match status" value="1"/>
</dbReference>
<keyword id="KW-0687">Ribonucleoprotein</keyword>
<keyword id="KW-0689">Ribosomal protein</keyword>
<feature type="chain" id="PRO_1000205890" description="Large ribosomal subunit protein bL19">
    <location>
        <begin position="1"/>
        <end position="117"/>
    </location>
</feature>
<accession>C4L604</accession>